<comment type="similarity">
    <text evidence="1">Belongs to the bacterial ribosomal protein bL28 family.</text>
</comment>
<feature type="chain" id="PRO_0000178504" description="Large ribosomal subunit protein bL28">
    <location>
        <begin position="1"/>
        <end position="64"/>
    </location>
</feature>
<feature type="region of interest" description="Disordered" evidence="2">
    <location>
        <begin position="1"/>
        <end position="21"/>
    </location>
</feature>
<evidence type="ECO:0000255" key="1">
    <source>
        <dbReference type="HAMAP-Rule" id="MF_00373"/>
    </source>
</evidence>
<evidence type="ECO:0000256" key="2">
    <source>
        <dbReference type="SAM" id="MobiDB-lite"/>
    </source>
</evidence>
<evidence type="ECO:0000305" key="3"/>
<name>RL28_MYCGE</name>
<reference key="1">
    <citation type="journal article" date="1995" name="Science">
        <title>The minimal gene complement of Mycoplasma genitalium.</title>
        <authorList>
            <person name="Fraser C.M."/>
            <person name="Gocayne J.D."/>
            <person name="White O."/>
            <person name="Adams M.D."/>
            <person name="Clayton R.A."/>
            <person name="Fleischmann R.D."/>
            <person name="Bult C.J."/>
            <person name="Kerlavage A.R."/>
            <person name="Sutton G.G."/>
            <person name="Kelley J.M."/>
            <person name="Fritchman J.L."/>
            <person name="Weidman J.F."/>
            <person name="Small K.V."/>
            <person name="Sandusky M."/>
            <person name="Fuhrmann J.L."/>
            <person name="Nguyen D.T."/>
            <person name="Utterback T.R."/>
            <person name="Saudek D.M."/>
            <person name="Phillips C.A."/>
            <person name="Merrick J.M."/>
            <person name="Tomb J.-F."/>
            <person name="Dougherty B.A."/>
            <person name="Bott K.F."/>
            <person name="Hu P.-C."/>
            <person name="Lucier T.S."/>
            <person name="Peterson S.N."/>
            <person name="Smith H.O."/>
            <person name="Hutchison C.A. III"/>
            <person name="Venter J.C."/>
        </authorList>
    </citation>
    <scope>NUCLEOTIDE SEQUENCE [LARGE SCALE GENOMIC DNA]</scope>
    <source>
        <strain>ATCC 33530 / DSM 19775 / NCTC 10195 / G37</strain>
    </source>
</reference>
<keyword id="KW-1185">Reference proteome</keyword>
<keyword id="KW-0687">Ribonucleoprotein</keyword>
<keyword id="KW-0689">Ribosomal protein</keyword>
<organism>
    <name type="scientific">Mycoplasma genitalium (strain ATCC 33530 / DSM 19775 / NCTC 10195 / G37)</name>
    <name type="common">Mycoplasmoides genitalium</name>
    <dbReference type="NCBI Taxonomy" id="243273"/>
    <lineage>
        <taxon>Bacteria</taxon>
        <taxon>Bacillati</taxon>
        <taxon>Mycoplasmatota</taxon>
        <taxon>Mycoplasmoidales</taxon>
        <taxon>Mycoplasmoidaceae</taxon>
        <taxon>Mycoplasmoides</taxon>
    </lineage>
</organism>
<protein>
    <recommendedName>
        <fullName evidence="1">Large ribosomal subunit protein bL28</fullName>
    </recommendedName>
    <alternativeName>
        <fullName evidence="3">50S ribosomal protein L28</fullName>
    </alternativeName>
</protein>
<dbReference type="EMBL" id="L43967">
    <property type="protein sequence ID" value="AAC72447.1"/>
    <property type="molecule type" value="Genomic_DNA"/>
</dbReference>
<dbReference type="PIR" id="A64247">
    <property type="entry name" value="A64247"/>
</dbReference>
<dbReference type="RefSeq" id="WP_009885606.1">
    <property type="nucleotide sequence ID" value="NC_000908.2"/>
</dbReference>
<dbReference type="SMR" id="P47665"/>
<dbReference type="STRING" id="243273.MG_426"/>
<dbReference type="GeneID" id="88282662"/>
<dbReference type="KEGG" id="mge:MG_426"/>
<dbReference type="eggNOG" id="COG0227">
    <property type="taxonomic scope" value="Bacteria"/>
</dbReference>
<dbReference type="HOGENOM" id="CLU_064548_7_2_14"/>
<dbReference type="InParanoid" id="P47665"/>
<dbReference type="OrthoDB" id="9805609at2"/>
<dbReference type="Proteomes" id="UP000000807">
    <property type="component" value="Chromosome"/>
</dbReference>
<dbReference type="GO" id="GO:1990904">
    <property type="term" value="C:ribonucleoprotein complex"/>
    <property type="evidence" value="ECO:0007669"/>
    <property type="project" value="UniProtKB-KW"/>
</dbReference>
<dbReference type="GO" id="GO:0005840">
    <property type="term" value="C:ribosome"/>
    <property type="evidence" value="ECO:0007669"/>
    <property type="project" value="UniProtKB-KW"/>
</dbReference>
<dbReference type="GO" id="GO:0003735">
    <property type="term" value="F:structural constituent of ribosome"/>
    <property type="evidence" value="ECO:0007669"/>
    <property type="project" value="InterPro"/>
</dbReference>
<dbReference type="GO" id="GO:0006412">
    <property type="term" value="P:translation"/>
    <property type="evidence" value="ECO:0007669"/>
    <property type="project" value="UniProtKB-UniRule"/>
</dbReference>
<dbReference type="Gene3D" id="2.30.170.40">
    <property type="entry name" value="Ribosomal protein L28/L24"/>
    <property type="match status" value="1"/>
</dbReference>
<dbReference type="HAMAP" id="MF_00373">
    <property type="entry name" value="Ribosomal_bL28"/>
    <property type="match status" value="1"/>
</dbReference>
<dbReference type="InterPro" id="IPR050096">
    <property type="entry name" value="Bacterial_rp_bL28"/>
</dbReference>
<dbReference type="InterPro" id="IPR026569">
    <property type="entry name" value="Ribosomal_bL28"/>
</dbReference>
<dbReference type="InterPro" id="IPR034704">
    <property type="entry name" value="Ribosomal_bL28/bL31-like_sf"/>
</dbReference>
<dbReference type="InterPro" id="IPR001383">
    <property type="entry name" value="Ribosomal_bL28_bact-type"/>
</dbReference>
<dbReference type="InterPro" id="IPR037147">
    <property type="entry name" value="Ribosomal_bL28_sf"/>
</dbReference>
<dbReference type="NCBIfam" id="TIGR00009">
    <property type="entry name" value="L28"/>
    <property type="match status" value="1"/>
</dbReference>
<dbReference type="PANTHER" id="PTHR39080">
    <property type="entry name" value="50S RIBOSOMAL PROTEIN L28"/>
    <property type="match status" value="1"/>
</dbReference>
<dbReference type="PANTHER" id="PTHR39080:SF1">
    <property type="entry name" value="LARGE RIBOSOMAL SUBUNIT PROTEIN BL28A"/>
    <property type="match status" value="1"/>
</dbReference>
<dbReference type="Pfam" id="PF00830">
    <property type="entry name" value="Ribosomal_L28"/>
    <property type="match status" value="1"/>
</dbReference>
<dbReference type="SUPFAM" id="SSF143800">
    <property type="entry name" value="L28p-like"/>
    <property type="match status" value="1"/>
</dbReference>
<gene>
    <name evidence="1" type="primary">rpmB</name>
    <name evidence="1" type="synonym">rpl28</name>
    <name type="ordered locus">MG426</name>
</gene>
<sequence length="64" mass="7486">MAKKDQLTLRGPLYGNNRSHSKTITRRKWNVNLQSCKIKDTNGKVTRILVSTKTIRTLKKQNRF</sequence>
<accession>P47665</accession>
<proteinExistence type="inferred from homology"/>